<gene>
    <name evidence="2" type="primary">RPL11</name>
    <name type="synonym">RPL11B</name>
    <name type="ordered locus">orf19.2232</name>
    <name type="ORF">CAALFM_C206810CA</name>
</gene>
<organism>
    <name type="scientific">Candida albicans (strain SC5314 / ATCC MYA-2876)</name>
    <name type="common">Yeast</name>
    <dbReference type="NCBI Taxonomy" id="237561"/>
    <lineage>
        <taxon>Eukaryota</taxon>
        <taxon>Fungi</taxon>
        <taxon>Dikarya</taxon>
        <taxon>Ascomycota</taxon>
        <taxon>Saccharomycotina</taxon>
        <taxon>Pichiomycetes</taxon>
        <taxon>Debaryomycetaceae</taxon>
        <taxon>Candida/Lodderomyces clade</taxon>
        <taxon>Candida</taxon>
    </lineage>
</organism>
<reference key="1">
    <citation type="journal article" date="2004" name="Proc. Natl. Acad. Sci. U.S.A.">
        <title>The diploid genome sequence of Candida albicans.</title>
        <authorList>
            <person name="Jones T."/>
            <person name="Federspiel N.A."/>
            <person name="Chibana H."/>
            <person name="Dungan J."/>
            <person name="Kalman S."/>
            <person name="Magee B.B."/>
            <person name="Newport G."/>
            <person name="Thorstenson Y.R."/>
            <person name="Agabian N."/>
            <person name="Magee P.T."/>
            <person name="Davis R.W."/>
            <person name="Scherer S."/>
        </authorList>
    </citation>
    <scope>NUCLEOTIDE SEQUENCE [LARGE SCALE GENOMIC DNA]</scope>
    <source>
        <strain>SC5314 / ATCC MYA-2876</strain>
    </source>
</reference>
<reference key="2">
    <citation type="journal article" date="2007" name="Genome Biol.">
        <title>Assembly of the Candida albicans genome into sixteen supercontigs aligned on the eight chromosomes.</title>
        <authorList>
            <person name="van het Hoog M."/>
            <person name="Rast T.J."/>
            <person name="Martchenko M."/>
            <person name="Grindle S."/>
            <person name="Dignard D."/>
            <person name="Hogues H."/>
            <person name="Cuomo C."/>
            <person name="Berriman M."/>
            <person name="Scherer S."/>
            <person name="Magee B.B."/>
            <person name="Whiteway M."/>
            <person name="Chibana H."/>
            <person name="Nantel A."/>
            <person name="Magee P.T."/>
        </authorList>
    </citation>
    <scope>GENOME REANNOTATION</scope>
    <source>
        <strain>SC5314 / ATCC MYA-2876</strain>
    </source>
</reference>
<reference key="3">
    <citation type="journal article" date="2013" name="Genome Biol.">
        <title>Assembly of a phased diploid Candida albicans genome facilitates allele-specific measurements and provides a simple model for repeat and indel structure.</title>
        <authorList>
            <person name="Muzzey D."/>
            <person name="Schwartz K."/>
            <person name="Weissman J.S."/>
            <person name="Sherlock G."/>
        </authorList>
    </citation>
    <scope>NUCLEOTIDE SEQUENCE [LARGE SCALE GENOMIC DNA]</scope>
    <scope>GENOME REANNOTATION</scope>
    <source>
        <strain>SC5314 / ATCC MYA-2876</strain>
    </source>
</reference>
<reference evidence="5 6 7" key="4">
    <citation type="journal article" date="2022" name="Sci. Adv.">
        <title>E-site drug specificity of the human pathogen Candida albicans ribosome.</title>
        <authorList>
            <person name="Zgadzay Y."/>
            <person name="Kolosova O."/>
            <person name="Stetsenko A."/>
            <person name="Wu C."/>
            <person name="Bruchlen D."/>
            <person name="Usachev K."/>
            <person name="Validov S."/>
            <person name="Jenner L."/>
            <person name="Rogachev A."/>
            <person name="Yusupova G."/>
            <person name="Sachs M.S."/>
            <person name="Guskov A."/>
            <person name="Yusupov M."/>
        </authorList>
    </citation>
    <scope>STRUCTURE BY ELECTRON MICROSCOPY (2.32 ANGSTROMS) OF THE 80S RIBOSOME</scope>
    <scope>SUBUNIT</scope>
</reference>
<feature type="chain" id="PRO_0000456496" description="Large ribosomal subunit protein uL5">
    <location>
        <begin position="1"/>
        <end position="174"/>
    </location>
</feature>
<proteinExistence type="evidence at protein level"/>
<sequence length="174" mass="19824">MSDKSQNVMRELRIEKLVLNICVGESGDRLTRAAKVLEQLSGQTPVQSKARYTVRTFGIRRNEKIAVHVTVRGPKAEEILERGLKVKEYQLRSKNFSATGNFGFGIDEHIDLGIKYDPSIGIYGMDFYVVMGRAGARVTRRKRARSTIGNSHKTNKEDTIQWFKTRYDAEVLDK</sequence>
<accession>A0A1D8PHW1</accession>
<dbReference type="EMBL" id="CP017624">
    <property type="protein sequence ID" value="AOW27682.1"/>
    <property type="molecule type" value="Genomic_DNA"/>
</dbReference>
<dbReference type="RefSeq" id="XP_019330794.1">
    <property type="nucleotide sequence ID" value="XM_019475249.1"/>
</dbReference>
<dbReference type="PDB" id="7PZY">
    <property type="method" value="EM"/>
    <property type="resolution" value="2.32 A"/>
    <property type="chains" value="s=1-174"/>
</dbReference>
<dbReference type="PDB" id="7Q08">
    <property type="method" value="EM"/>
    <property type="resolution" value="2.56 A"/>
    <property type="chains" value="s=1-174"/>
</dbReference>
<dbReference type="PDB" id="7Q0F">
    <property type="method" value="EM"/>
    <property type="resolution" value="2.64 A"/>
    <property type="chains" value="s=1-174"/>
</dbReference>
<dbReference type="PDB" id="7Q0P">
    <property type="method" value="EM"/>
    <property type="resolution" value="2.77 A"/>
    <property type="chains" value="s=1-174"/>
</dbReference>
<dbReference type="PDB" id="7Q0R">
    <property type="method" value="EM"/>
    <property type="resolution" value="2.67 A"/>
    <property type="chains" value="s=1-174"/>
</dbReference>
<dbReference type="PDB" id="8C3A">
    <property type="method" value="X-ray"/>
    <property type="resolution" value="3.00 A"/>
    <property type="chains" value="BF/s=1-174"/>
</dbReference>
<dbReference type="PDB" id="8OGJ">
    <property type="method" value="EM"/>
    <property type="resolution" value="3.10 A"/>
    <property type="chains" value="s=1-174"/>
</dbReference>
<dbReference type="PDB" id="8OH6">
    <property type="method" value="X-ray"/>
    <property type="resolution" value="3.35 A"/>
    <property type="chains" value="BF/s=1-174"/>
</dbReference>
<dbReference type="PDB" id="8OI5">
    <property type="method" value="X-ray"/>
    <property type="resolution" value="2.90 A"/>
    <property type="chains" value="BF/s=1-174"/>
</dbReference>
<dbReference type="PDB" id="8OJ3">
    <property type="method" value="X-ray"/>
    <property type="resolution" value="3.50 A"/>
    <property type="chains" value="BF/s=1-174"/>
</dbReference>
<dbReference type="PDBsum" id="7PZY"/>
<dbReference type="PDBsum" id="7Q08"/>
<dbReference type="PDBsum" id="7Q0F"/>
<dbReference type="PDBsum" id="7Q0P"/>
<dbReference type="PDBsum" id="7Q0R"/>
<dbReference type="PDBsum" id="8C3A"/>
<dbReference type="PDBsum" id="8OGJ"/>
<dbReference type="PDBsum" id="8OH6"/>
<dbReference type="PDBsum" id="8OI5"/>
<dbReference type="PDBsum" id="8OJ3"/>
<dbReference type="SMR" id="A0A1D8PHW1"/>
<dbReference type="FunCoup" id="A0A1D8PHW1">
    <property type="interactions" value="1079"/>
</dbReference>
<dbReference type="STRING" id="237561.A0A1D8PHW1"/>
<dbReference type="EnsemblFungi" id="C2_06810C_A-T">
    <property type="protein sequence ID" value="C2_06810C_A-T-p1"/>
    <property type="gene ID" value="C2_06810C_A"/>
</dbReference>
<dbReference type="GeneID" id="3643489"/>
<dbReference type="KEGG" id="cal:CAALFM_C206810CA"/>
<dbReference type="CGD" id="CAL0000192242">
    <property type="gene designation" value="RPL11"/>
</dbReference>
<dbReference type="VEuPathDB" id="FungiDB:C2_06810C_A"/>
<dbReference type="eggNOG" id="KOG0397">
    <property type="taxonomic scope" value="Eukaryota"/>
</dbReference>
<dbReference type="InParanoid" id="A0A1D8PHW1"/>
<dbReference type="OMA" id="MDFYCIM"/>
<dbReference type="OrthoDB" id="1734943at2759"/>
<dbReference type="Proteomes" id="UP000000559">
    <property type="component" value="Chromosome 2"/>
</dbReference>
<dbReference type="GO" id="GO:0022625">
    <property type="term" value="C:cytosolic large ribosomal subunit"/>
    <property type="evidence" value="ECO:0000318"/>
    <property type="project" value="GO_Central"/>
</dbReference>
<dbReference type="GO" id="GO:0003723">
    <property type="term" value="F:RNA binding"/>
    <property type="evidence" value="ECO:0000318"/>
    <property type="project" value="GO_Central"/>
</dbReference>
<dbReference type="GO" id="GO:0003735">
    <property type="term" value="F:structural constituent of ribosome"/>
    <property type="evidence" value="ECO:0000318"/>
    <property type="project" value="GO_Central"/>
</dbReference>
<dbReference type="GO" id="GO:0006412">
    <property type="term" value="P:translation"/>
    <property type="evidence" value="ECO:0000318"/>
    <property type="project" value="GO_Central"/>
</dbReference>
<dbReference type="FunFam" id="3.30.1440.10:FF:000002">
    <property type="entry name" value="60S ribosomal protein L11"/>
    <property type="match status" value="1"/>
</dbReference>
<dbReference type="Gene3D" id="3.30.1440.10">
    <property type="match status" value="1"/>
</dbReference>
<dbReference type="InterPro" id="IPR002132">
    <property type="entry name" value="Ribosomal_uL5"/>
</dbReference>
<dbReference type="InterPro" id="IPR031309">
    <property type="entry name" value="Ribosomal_uL5_C"/>
</dbReference>
<dbReference type="InterPro" id="IPR020929">
    <property type="entry name" value="Ribosomal_uL5_CS"/>
</dbReference>
<dbReference type="InterPro" id="IPR022803">
    <property type="entry name" value="Ribosomal_uL5_dom_sf"/>
</dbReference>
<dbReference type="InterPro" id="IPR031310">
    <property type="entry name" value="Ribosomal_uL5_N"/>
</dbReference>
<dbReference type="NCBIfam" id="NF003258">
    <property type="entry name" value="PRK04219.1"/>
    <property type="match status" value="1"/>
</dbReference>
<dbReference type="PANTHER" id="PTHR11994">
    <property type="entry name" value="60S RIBOSOMAL PROTEIN L11-RELATED"/>
    <property type="match status" value="1"/>
</dbReference>
<dbReference type="Pfam" id="PF00281">
    <property type="entry name" value="Ribosomal_L5"/>
    <property type="match status" value="1"/>
</dbReference>
<dbReference type="Pfam" id="PF00673">
    <property type="entry name" value="Ribosomal_L5_C"/>
    <property type="match status" value="1"/>
</dbReference>
<dbReference type="PIRSF" id="PIRSF002161">
    <property type="entry name" value="Ribosomal_L5"/>
    <property type="match status" value="1"/>
</dbReference>
<dbReference type="SUPFAM" id="SSF55282">
    <property type="entry name" value="RL5-like"/>
    <property type="match status" value="1"/>
</dbReference>
<dbReference type="PROSITE" id="PS00358">
    <property type="entry name" value="RIBOSOMAL_L5"/>
    <property type="match status" value="1"/>
</dbReference>
<name>RL11_CANAL</name>
<comment type="function">
    <text evidence="4">Component of the ribosome, a large ribonucleoprotein complex responsible for the synthesis of proteins in the cell. The small ribosomal subunit (SSU) binds messenger RNAs (mRNAs) and translates the encoded message by selecting cognate aminoacyl-transfer RNA (tRNA) molecules. The large subunit (LSU) contains the ribosomal catalytic site termed the peptidyl transferase center (PTC), which catalyzes the formation of peptide bonds, thereby polymerizing the amino acids delivered by tRNAs into a polypeptide chain. The nascent polypeptides leave the ribosome through a tunnel in the LSU and interact with protein factors that function in enzymatic processing, targeting, and the membrane insertion of nascent chains at the exit of the ribosomal tunnel.</text>
</comment>
<comment type="subunit">
    <text evidence="1">Component of the large ribosomal subunit (PubMed:35613268). Mature ribosomes consist of a small (40S) and a large (60S) subunit (PubMed:35613268). The 40S subunit contains about 32 different proteins and 1 molecule of RNA (18S) (PubMed:35613268). The 60S subunit contains 45 different proteins and 3 molecules of RNA (25S, 5.8S and 5S) (PubMed:35613268).</text>
</comment>
<comment type="subcellular location">
    <subcellularLocation>
        <location evidence="4">Cytoplasm</location>
    </subcellularLocation>
</comment>
<comment type="similarity">
    <text evidence="3">Belongs to the universal ribosomal protein uL5 family.</text>
</comment>
<evidence type="ECO:0000269" key="1">
    <source>
    </source>
</evidence>
<evidence type="ECO:0000303" key="2">
    <source>
    </source>
</evidence>
<evidence type="ECO:0000305" key="3"/>
<evidence type="ECO:0000305" key="4">
    <source>
    </source>
</evidence>
<evidence type="ECO:0007744" key="5">
    <source>
        <dbReference type="PDB" id="7PZY"/>
    </source>
</evidence>
<evidence type="ECO:0007744" key="6">
    <source>
        <dbReference type="PDB" id="7Q0F"/>
    </source>
</evidence>
<evidence type="ECO:0007744" key="7">
    <source>
        <dbReference type="PDB" id="7Q0P"/>
    </source>
</evidence>
<protein>
    <recommendedName>
        <fullName evidence="2">Large ribosomal subunit protein uL5</fullName>
    </recommendedName>
    <alternativeName>
        <fullName>60S ribosomal protein L11</fullName>
    </alternativeName>
</protein>
<keyword id="KW-0002">3D-structure</keyword>
<keyword id="KW-0963">Cytoplasm</keyword>
<keyword id="KW-1185">Reference proteome</keyword>
<keyword id="KW-0687">Ribonucleoprotein</keyword>
<keyword id="KW-0689">Ribosomal protein</keyword>